<protein>
    <recommendedName>
        <fullName evidence="1">Small ribosomal subunit protein uS15</fullName>
    </recommendedName>
    <alternativeName>
        <fullName evidence="2">30S ribosomal protein S15</fullName>
    </alternativeName>
</protein>
<name>RS15_PROM2</name>
<gene>
    <name evidence="1" type="primary">rpsO</name>
    <name evidence="1" type="synonym">rps15</name>
    <name type="ordered locus">P9215_09471</name>
</gene>
<accession>A8G4N1</accession>
<organism>
    <name type="scientific">Prochlorococcus marinus (strain MIT 9215)</name>
    <dbReference type="NCBI Taxonomy" id="93060"/>
    <lineage>
        <taxon>Bacteria</taxon>
        <taxon>Bacillati</taxon>
        <taxon>Cyanobacteriota</taxon>
        <taxon>Cyanophyceae</taxon>
        <taxon>Synechococcales</taxon>
        <taxon>Prochlorococcaceae</taxon>
        <taxon>Prochlorococcus</taxon>
    </lineage>
</organism>
<keyword id="KW-0687">Ribonucleoprotein</keyword>
<keyword id="KW-0689">Ribosomal protein</keyword>
<keyword id="KW-0694">RNA-binding</keyword>
<keyword id="KW-0699">rRNA-binding</keyword>
<reference key="1">
    <citation type="journal article" date="2007" name="PLoS Genet.">
        <title>Patterns and implications of gene gain and loss in the evolution of Prochlorococcus.</title>
        <authorList>
            <person name="Kettler G.C."/>
            <person name="Martiny A.C."/>
            <person name="Huang K."/>
            <person name="Zucker J."/>
            <person name="Coleman M.L."/>
            <person name="Rodrigue S."/>
            <person name="Chen F."/>
            <person name="Lapidus A."/>
            <person name="Ferriera S."/>
            <person name="Johnson J."/>
            <person name="Steglich C."/>
            <person name="Church G.M."/>
            <person name="Richardson P."/>
            <person name="Chisholm S.W."/>
        </authorList>
    </citation>
    <scope>NUCLEOTIDE SEQUENCE [LARGE SCALE GENOMIC DNA]</scope>
    <source>
        <strain>MIT 9215</strain>
    </source>
</reference>
<sequence length="89" mass="10185">MSLDTAEKQKLIETHQVHPTDTGSAEVQVAMLSKRISKLSDHLQGNIHDFSSRQGLLKMIGKRKRLLSYIKDKNIQRYQELVKKIGIRG</sequence>
<evidence type="ECO:0000255" key="1">
    <source>
        <dbReference type="HAMAP-Rule" id="MF_01343"/>
    </source>
</evidence>
<evidence type="ECO:0000305" key="2"/>
<dbReference type="EMBL" id="CP000825">
    <property type="protein sequence ID" value="ABV50562.1"/>
    <property type="status" value="ALT_INIT"/>
    <property type="molecule type" value="Genomic_DNA"/>
</dbReference>
<dbReference type="RefSeq" id="WP_012007653.1">
    <property type="nucleotide sequence ID" value="NC_009840.1"/>
</dbReference>
<dbReference type="SMR" id="A8G4N1"/>
<dbReference type="STRING" id="93060.P9215_09471"/>
<dbReference type="KEGG" id="pmh:P9215_09471"/>
<dbReference type="eggNOG" id="COG0184">
    <property type="taxonomic scope" value="Bacteria"/>
</dbReference>
<dbReference type="HOGENOM" id="CLU_148518_0_0_3"/>
<dbReference type="OrthoDB" id="9799262at2"/>
<dbReference type="Proteomes" id="UP000002014">
    <property type="component" value="Chromosome"/>
</dbReference>
<dbReference type="GO" id="GO:0022627">
    <property type="term" value="C:cytosolic small ribosomal subunit"/>
    <property type="evidence" value="ECO:0007669"/>
    <property type="project" value="TreeGrafter"/>
</dbReference>
<dbReference type="GO" id="GO:0019843">
    <property type="term" value="F:rRNA binding"/>
    <property type="evidence" value="ECO:0007669"/>
    <property type="project" value="UniProtKB-UniRule"/>
</dbReference>
<dbReference type="GO" id="GO:0003735">
    <property type="term" value="F:structural constituent of ribosome"/>
    <property type="evidence" value="ECO:0007669"/>
    <property type="project" value="InterPro"/>
</dbReference>
<dbReference type="GO" id="GO:0006412">
    <property type="term" value="P:translation"/>
    <property type="evidence" value="ECO:0007669"/>
    <property type="project" value="UniProtKB-UniRule"/>
</dbReference>
<dbReference type="CDD" id="cd00353">
    <property type="entry name" value="Ribosomal_S15p_S13e"/>
    <property type="match status" value="1"/>
</dbReference>
<dbReference type="FunFam" id="1.10.287.10:FF:000002">
    <property type="entry name" value="30S ribosomal protein S15"/>
    <property type="match status" value="1"/>
</dbReference>
<dbReference type="Gene3D" id="6.10.250.3130">
    <property type="match status" value="1"/>
</dbReference>
<dbReference type="Gene3D" id="1.10.287.10">
    <property type="entry name" value="S15/NS1, RNA-binding"/>
    <property type="match status" value="1"/>
</dbReference>
<dbReference type="HAMAP" id="MF_01343_B">
    <property type="entry name" value="Ribosomal_uS15_B"/>
    <property type="match status" value="1"/>
</dbReference>
<dbReference type="InterPro" id="IPR000589">
    <property type="entry name" value="Ribosomal_uS15"/>
</dbReference>
<dbReference type="InterPro" id="IPR005290">
    <property type="entry name" value="Ribosomal_uS15_bac-type"/>
</dbReference>
<dbReference type="InterPro" id="IPR009068">
    <property type="entry name" value="uS15_NS1_RNA-bd_sf"/>
</dbReference>
<dbReference type="NCBIfam" id="TIGR00952">
    <property type="entry name" value="S15_bact"/>
    <property type="match status" value="1"/>
</dbReference>
<dbReference type="PANTHER" id="PTHR23321">
    <property type="entry name" value="RIBOSOMAL PROTEIN S15, BACTERIAL AND ORGANELLAR"/>
    <property type="match status" value="1"/>
</dbReference>
<dbReference type="PANTHER" id="PTHR23321:SF26">
    <property type="entry name" value="SMALL RIBOSOMAL SUBUNIT PROTEIN US15M"/>
    <property type="match status" value="1"/>
</dbReference>
<dbReference type="Pfam" id="PF00312">
    <property type="entry name" value="Ribosomal_S15"/>
    <property type="match status" value="1"/>
</dbReference>
<dbReference type="SMART" id="SM01387">
    <property type="entry name" value="Ribosomal_S15"/>
    <property type="match status" value="1"/>
</dbReference>
<dbReference type="SUPFAM" id="SSF47060">
    <property type="entry name" value="S15/NS1 RNA-binding domain"/>
    <property type="match status" value="1"/>
</dbReference>
<dbReference type="PROSITE" id="PS00362">
    <property type="entry name" value="RIBOSOMAL_S15"/>
    <property type="match status" value="1"/>
</dbReference>
<comment type="function">
    <text evidence="1">One of the primary rRNA binding proteins, it binds directly to 16S rRNA where it helps nucleate assembly of the platform of the 30S subunit by binding and bridging several RNA helices of the 16S rRNA.</text>
</comment>
<comment type="function">
    <text evidence="1">Forms an intersubunit bridge (bridge B4) with the 23S rRNA of the 50S subunit in the ribosome.</text>
</comment>
<comment type="subunit">
    <text evidence="1">Part of the 30S ribosomal subunit. Forms a bridge to the 50S subunit in the 70S ribosome, contacting the 23S rRNA.</text>
</comment>
<comment type="similarity">
    <text evidence="1">Belongs to the universal ribosomal protein uS15 family.</text>
</comment>
<comment type="sequence caution" evidence="2">
    <conflict type="erroneous initiation">
        <sequence resource="EMBL-CDS" id="ABV50562"/>
    </conflict>
</comment>
<feature type="chain" id="PRO_0000354212" description="Small ribosomal subunit protein uS15">
    <location>
        <begin position="1"/>
        <end position="89"/>
    </location>
</feature>
<proteinExistence type="inferred from homology"/>